<organism>
    <name type="scientific">Chlamydia trachomatis serovar L2b (strain UCH-1/proctitis)</name>
    <dbReference type="NCBI Taxonomy" id="471473"/>
    <lineage>
        <taxon>Bacteria</taxon>
        <taxon>Pseudomonadati</taxon>
        <taxon>Chlamydiota</taxon>
        <taxon>Chlamydiia</taxon>
        <taxon>Chlamydiales</taxon>
        <taxon>Chlamydiaceae</taxon>
        <taxon>Chlamydia/Chlamydophila group</taxon>
        <taxon>Chlamydia</taxon>
    </lineage>
</organism>
<comment type="function">
    <text evidence="1">Is required not only for elongation of protein synthesis but also for the initiation of all mRNA translation through initiator tRNA(fMet) aminoacylation.</text>
</comment>
<comment type="catalytic activity">
    <reaction evidence="1">
        <text>tRNA(Met) + L-methionine + ATP = L-methionyl-tRNA(Met) + AMP + diphosphate</text>
        <dbReference type="Rhea" id="RHEA:13481"/>
        <dbReference type="Rhea" id="RHEA-COMP:9667"/>
        <dbReference type="Rhea" id="RHEA-COMP:9698"/>
        <dbReference type="ChEBI" id="CHEBI:30616"/>
        <dbReference type="ChEBI" id="CHEBI:33019"/>
        <dbReference type="ChEBI" id="CHEBI:57844"/>
        <dbReference type="ChEBI" id="CHEBI:78442"/>
        <dbReference type="ChEBI" id="CHEBI:78530"/>
        <dbReference type="ChEBI" id="CHEBI:456215"/>
        <dbReference type="EC" id="6.1.1.10"/>
    </reaction>
</comment>
<comment type="cofactor">
    <cofactor evidence="1">
        <name>Zn(2+)</name>
        <dbReference type="ChEBI" id="CHEBI:29105"/>
    </cofactor>
    <text evidence="1">Binds 1 zinc ion per subunit.</text>
</comment>
<comment type="subunit">
    <text evidence="1">Monomer.</text>
</comment>
<comment type="subcellular location">
    <subcellularLocation>
        <location evidence="1">Cytoplasm</location>
    </subcellularLocation>
</comment>
<comment type="similarity">
    <text evidence="1">Belongs to the class-I aminoacyl-tRNA synthetase family. MetG type 1 subfamily.</text>
</comment>
<feature type="chain" id="PRO_1000093707" description="Methionine--tRNA ligase">
    <location>
        <begin position="1"/>
        <end position="550"/>
    </location>
</feature>
<feature type="short sequence motif" description="'HIGH' region">
    <location>
        <begin position="13"/>
        <end position="23"/>
    </location>
</feature>
<feature type="short sequence motif" description="'KMSKS' region">
    <location>
        <begin position="331"/>
        <end position="335"/>
    </location>
</feature>
<feature type="binding site" evidence="1">
    <location>
        <position position="145"/>
    </location>
    <ligand>
        <name>Zn(2+)</name>
        <dbReference type="ChEBI" id="CHEBI:29105"/>
    </ligand>
</feature>
<feature type="binding site" evidence="1">
    <location>
        <position position="148"/>
    </location>
    <ligand>
        <name>Zn(2+)</name>
        <dbReference type="ChEBI" id="CHEBI:29105"/>
    </ligand>
</feature>
<feature type="binding site" evidence="1">
    <location>
        <position position="158"/>
    </location>
    <ligand>
        <name>Zn(2+)</name>
        <dbReference type="ChEBI" id="CHEBI:29105"/>
    </ligand>
</feature>
<feature type="binding site" evidence="1">
    <location>
        <position position="161"/>
    </location>
    <ligand>
        <name>Zn(2+)</name>
        <dbReference type="ChEBI" id="CHEBI:29105"/>
    </ligand>
</feature>
<feature type="binding site" evidence="1">
    <location>
        <position position="334"/>
    </location>
    <ligand>
        <name>ATP</name>
        <dbReference type="ChEBI" id="CHEBI:30616"/>
    </ligand>
</feature>
<reference key="1">
    <citation type="journal article" date="2008" name="Genome Res.">
        <title>Chlamydia trachomatis: genome sequence analysis of lymphogranuloma venereum isolates.</title>
        <authorList>
            <person name="Thomson N.R."/>
            <person name="Holden M.T.G."/>
            <person name="Carder C."/>
            <person name="Lennard N."/>
            <person name="Lockey S.J."/>
            <person name="Marsh P."/>
            <person name="Skipp P."/>
            <person name="O'Connor C.D."/>
            <person name="Goodhead I."/>
            <person name="Norbertzcak H."/>
            <person name="Harris B."/>
            <person name="Ormond D."/>
            <person name="Rance R."/>
            <person name="Quail M.A."/>
            <person name="Parkhill J."/>
            <person name="Stephens R.S."/>
            <person name="Clarke I.N."/>
        </authorList>
    </citation>
    <scope>NUCLEOTIDE SEQUENCE [LARGE SCALE GENOMIC DNA]</scope>
    <source>
        <strain>UCH-1/proctitis</strain>
    </source>
</reference>
<sequence length="550" mass="62749">MESSRILITSALPYANGPLHFGHITGAYLPADVYARFQRLQGKEVLYICGSDEYGIAITLNAELAGMGYQEYVDMYHKLHKDTFKKLGISVDFFSRTTNAYHPAIVQDFYRNLQERGLVENQVTEQLYSEEEGKFLADRYVVGTCPKCGFDRARGDECQQCGADYEARDLKEPRSKLTGAALSLRDTEHAYLHLERMKEDLLAFVQGIYLRPHMRNFVTDYIEHLRPRAVTRDLSWGIPVPDLENKVFYVWFDAPIGYISGTMDWAASIGDPEAWKKFWLDDTVTYAQFIGKDNTSFHAVIFPAMEIGQSLPYKKVDALVTSEFLLLEGFQFSKSDGNFIDMDAFLETYSLDKLRYVLAAIAPETSDSEFSFQEFKTRCNSELVGKYGNFVNRVLAFAVKNGCTELSSPQLEQKDLDFISKSQKLAKDAAEHYAQYSLRKACSTIMELAALGNGYFNDEAPWKLAKEGNWNRVRAILFCACYCQKLLALISYPIMPETALKILEMIAPYSLDLGSQDPDRLHSLWTDSFFDYSEEKFSLKEPELLFTMVE</sequence>
<gene>
    <name evidence="1" type="primary">metG</name>
    <name type="ordered locus">CTLon_0282</name>
</gene>
<protein>
    <recommendedName>
        <fullName evidence="1">Methionine--tRNA ligase</fullName>
        <ecNumber evidence="1">6.1.1.10</ecNumber>
    </recommendedName>
    <alternativeName>
        <fullName evidence="1">Methionyl-tRNA synthetase</fullName>
        <shortName evidence="1">MetRS</shortName>
    </alternativeName>
</protein>
<keyword id="KW-0030">Aminoacyl-tRNA synthetase</keyword>
<keyword id="KW-0067">ATP-binding</keyword>
<keyword id="KW-0963">Cytoplasm</keyword>
<keyword id="KW-0436">Ligase</keyword>
<keyword id="KW-0479">Metal-binding</keyword>
<keyword id="KW-0547">Nucleotide-binding</keyword>
<keyword id="KW-0648">Protein biosynthesis</keyword>
<keyword id="KW-0862">Zinc</keyword>
<proteinExistence type="inferred from homology"/>
<accession>B0BB18</accession>
<name>SYM_CHLTB</name>
<dbReference type="EC" id="6.1.1.10" evidence="1"/>
<dbReference type="EMBL" id="AM884177">
    <property type="protein sequence ID" value="CAP06680.1"/>
    <property type="molecule type" value="Genomic_DNA"/>
</dbReference>
<dbReference type="RefSeq" id="WP_009873506.1">
    <property type="nucleotide sequence ID" value="NC_010280.2"/>
</dbReference>
<dbReference type="SMR" id="B0BB18"/>
<dbReference type="KEGG" id="ctl:CTLon_0282"/>
<dbReference type="HOGENOM" id="CLU_009710_1_2_0"/>
<dbReference type="Proteomes" id="UP001154401">
    <property type="component" value="Chromosome"/>
</dbReference>
<dbReference type="GO" id="GO:0005829">
    <property type="term" value="C:cytosol"/>
    <property type="evidence" value="ECO:0007669"/>
    <property type="project" value="TreeGrafter"/>
</dbReference>
<dbReference type="GO" id="GO:0005524">
    <property type="term" value="F:ATP binding"/>
    <property type="evidence" value="ECO:0007669"/>
    <property type="project" value="UniProtKB-UniRule"/>
</dbReference>
<dbReference type="GO" id="GO:0046872">
    <property type="term" value="F:metal ion binding"/>
    <property type="evidence" value="ECO:0007669"/>
    <property type="project" value="UniProtKB-KW"/>
</dbReference>
<dbReference type="GO" id="GO:0004825">
    <property type="term" value="F:methionine-tRNA ligase activity"/>
    <property type="evidence" value="ECO:0007669"/>
    <property type="project" value="UniProtKB-UniRule"/>
</dbReference>
<dbReference type="GO" id="GO:0006431">
    <property type="term" value="P:methionyl-tRNA aminoacylation"/>
    <property type="evidence" value="ECO:0007669"/>
    <property type="project" value="UniProtKB-UniRule"/>
</dbReference>
<dbReference type="CDD" id="cd07957">
    <property type="entry name" value="Anticodon_Ia_Met"/>
    <property type="match status" value="1"/>
</dbReference>
<dbReference type="CDD" id="cd00814">
    <property type="entry name" value="MetRS_core"/>
    <property type="match status" value="1"/>
</dbReference>
<dbReference type="FunFam" id="2.20.28.20:FF:000001">
    <property type="entry name" value="Methionine--tRNA ligase"/>
    <property type="match status" value="1"/>
</dbReference>
<dbReference type="Gene3D" id="3.40.50.620">
    <property type="entry name" value="HUPs"/>
    <property type="match status" value="1"/>
</dbReference>
<dbReference type="Gene3D" id="1.10.730.10">
    <property type="entry name" value="Isoleucyl-tRNA Synthetase, Domain 1"/>
    <property type="match status" value="1"/>
</dbReference>
<dbReference type="Gene3D" id="2.20.28.20">
    <property type="entry name" value="Methionyl-tRNA synthetase, Zn-domain"/>
    <property type="match status" value="1"/>
</dbReference>
<dbReference type="HAMAP" id="MF_00098">
    <property type="entry name" value="Met_tRNA_synth_type1"/>
    <property type="match status" value="1"/>
</dbReference>
<dbReference type="InterPro" id="IPR041872">
    <property type="entry name" value="Anticodon_Met"/>
</dbReference>
<dbReference type="InterPro" id="IPR023458">
    <property type="entry name" value="Met-tRNA_ligase_1"/>
</dbReference>
<dbReference type="InterPro" id="IPR014758">
    <property type="entry name" value="Met-tRNA_synth"/>
</dbReference>
<dbReference type="InterPro" id="IPR015413">
    <property type="entry name" value="Methionyl/Leucyl_tRNA_Synth"/>
</dbReference>
<dbReference type="InterPro" id="IPR033911">
    <property type="entry name" value="MetRS_core"/>
</dbReference>
<dbReference type="InterPro" id="IPR029038">
    <property type="entry name" value="MetRS_Zn"/>
</dbReference>
<dbReference type="InterPro" id="IPR014729">
    <property type="entry name" value="Rossmann-like_a/b/a_fold"/>
</dbReference>
<dbReference type="InterPro" id="IPR009080">
    <property type="entry name" value="tRNAsynth_Ia_anticodon-bd"/>
</dbReference>
<dbReference type="NCBIfam" id="TIGR00398">
    <property type="entry name" value="metG"/>
    <property type="match status" value="1"/>
</dbReference>
<dbReference type="PANTHER" id="PTHR45765">
    <property type="entry name" value="METHIONINE--TRNA LIGASE"/>
    <property type="match status" value="1"/>
</dbReference>
<dbReference type="PANTHER" id="PTHR45765:SF1">
    <property type="entry name" value="METHIONINE--TRNA LIGASE, CYTOPLASMIC"/>
    <property type="match status" value="1"/>
</dbReference>
<dbReference type="Pfam" id="PF19303">
    <property type="entry name" value="Anticodon_3"/>
    <property type="match status" value="1"/>
</dbReference>
<dbReference type="Pfam" id="PF09334">
    <property type="entry name" value="tRNA-synt_1g"/>
    <property type="match status" value="1"/>
</dbReference>
<dbReference type="PRINTS" id="PR01041">
    <property type="entry name" value="TRNASYNTHMET"/>
</dbReference>
<dbReference type="SUPFAM" id="SSF47323">
    <property type="entry name" value="Anticodon-binding domain of a subclass of class I aminoacyl-tRNA synthetases"/>
    <property type="match status" value="1"/>
</dbReference>
<dbReference type="SUPFAM" id="SSF57770">
    <property type="entry name" value="Methionyl-tRNA synthetase (MetRS), Zn-domain"/>
    <property type="match status" value="1"/>
</dbReference>
<dbReference type="SUPFAM" id="SSF52374">
    <property type="entry name" value="Nucleotidylyl transferase"/>
    <property type="match status" value="1"/>
</dbReference>
<evidence type="ECO:0000255" key="1">
    <source>
        <dbReference type="HAMAP-Rule" id="MF_00098"/>
    </source>
</evidence>